<proteinExistence type="inferred from homology"/>
<gene>
    <name evidence="1" type="primary">glgA</name>
    <name type="ordered locus">FN0853</name>
</gene>
<dbReference type="EC" id="2.4.1.21" evidence="1"/>
<dbReference type="EMBL" id="AE009951">
    <property type="protein sequence ID" value="AAL95049.1"/>
    <property type="molecule type" value="Genomic_DNA"/>
</dbReference>
<dbReference type="RefSeq" id="NP_603750.1">
    <property type="nucleotide sequence ID" value="NC_003454.1"/>
</dbReference>
<dbReference type="RefSeq" id="WP_011016702.1">
    <property type="nucleotide sequence ID" value="NZ_OZ209243.1"/>
</dbReference>
<dbReference type="SMR" id="Q8RF65"/>
<dbReference type="FunCoup" id="Q8RF65">
    <property type="interactions" value="69"/>
</dbReference>
<dbReference type="STRING" id="190304.FN0853"/>
<dbReference type="CAZy" id="GT5">
    <property type="family name" value="Glycosyltransferase Family 5"/>
</dbReference>
<dbReference type="PaxDb" id="190304-FN0853"/>
<dbReference type="EnsemblBacteria" id="AAL95049">
    <property type="protein sequence ID" value="AAL95049"/>
    <property type="gene ID" value="FN0853"/>
</dbReference>
<dbReference type="KEGG" id="fnu:FN0853"/>
<dbReference type="PATRIC" id="fig|190304.8.peg.1414"/>
<dbReference type="eggNOG" id="COG0297">
    <property type="taxonomic scope" value="Bacteria"/>
</dbReference>
<dbReference type="HOGENOM" id="CLU_009583_18_2_0"/>
<dbReference type="InParanoid" id="Q8RF65"/>
<dbReference type="BioCyc" id="FNUC190304:G1FZS-1436-MONOMER"/>
<dbReference type="UniPathway" id="UPA00164"/>
<dbReference type="Proteomes" id="UP000002521">
    <property type="component" value="Chromosome"/>
</dbReference>
<dbReference type="GO" id="GO:0009011">
    <property type="term" value="F:alpha-1,4-glucan glucosyltransferase (ADP-glucose donor) activity"/>
    <property type="evidence" value="ECO:0007669"/>
    <property type="project" value="UniProtKB-UniRule"/>
</dbReference>
<dbReference type="GO" id="GO:0004373">
    <property type="term" value="F:alpha-1,4-glucan glucosyltransferase (UDP-glucose donor) activity"/>
    <property type="evidence" value="ECO:0007669"/>
    <property type="project" value="InterPro"/>
</dbReference>
<dbReference type="GO" id="GO:0005978">
    <property type="term" value="P:glycogen biosynthetic process"/>
    <property type="evidence" value="ECO:0007669"/>
    <property type="project" value="UniProtKB-UniRule"/>
</dbReference>
<dbReference type="CDD" id="cd03791">
    <property type="entry name" value="GT5_Glycogen_synthase_DULL1-like"/>
    <property type="match status" value="1"/>
</dbReference>
<dbReference type="Gene3D" id="3.40.50.2000">
    <property type="entry name" value="Glycogen Phosphorylase B"/>
    <property type="match status" value="2"/>
</dbReference>
<dbReference type="HAMAP" id="MF_00484">
    <property type="entry name" value="Glycogen_synth"/>
    <property type="match status" value="1"/>
</dbReference>
<dbReference type="InterPro" id="IPR001296">
    <property type="entry name" value="Glyco_trans_1"/>
</dbReference>
<dbReference type="InterPro" id="IPR011835">
    <property type="entry name" value="GS/SS"/>
</dbReference>
<dbReference type="InterPro" id="IPR013534">
    <property type="entry name" value="Starch_synth_cat_dom"/>
</dbReference>
<dbReference type="NCBIfam" id="TIGR02095">
    <property type="entry name" value="glgA"/>
    <property type="match status" value="1"/>
</dbReference>
<dbReference type="PANTHER" id="PTHR45825:SF11">
    <property type="entry name" value="ALPHA AMYLASE DOMAIN-CONTAINING PROTEIN"/>
    <property type="match status" value="1"/>
</dbReference>
<dbReference type="PANTHER" id="PTHR45825">
    <property type="entry name" value="GRANULE-BOUND STARCH SYNTHASE 1, CHLOROPLASTIC/AMYLOPLASTIC"/>
    <property type="match status" value="1"/>
</dbReference>
<dbReference type="Pfam" id="PF08323">
    <property type="entry name" value="Glyco_transf_5"/>
    <property type="match status" value="1"/>
</dbReference>
<dbReference type="Pfam" id="PF00534">
    <property type="entry name" value="Glycos_transf_1"/>
    <property type="match status" value="1"/>
</dbReference>
<dbReference type="SUPFAM" id="SSF53756">
    <property type="entry name" value="UDP-Glycosyltransferase/glycogen phosphorylase"/>
    <property type="match status" value="1"/>
</dbReference>
<sequence length="461" mass="53586">MKVLFATGEAFPFVKTGGLGDVSYSLPKTLKQKENVDIRVILPKYSKISNELLKDARHLGHKEIWVAHHNEYVGIEEVELEGVIYYFVDNERYFKRPNVYGEFDDCERFLFFCKAVVETMDITKFKPDIIHCNDWQSALIPIYLKERGIYDVKTIFTIHNLRFQGFFFNNVIEDLLEIDRAKYFQEDGLKYYDMISFLKGGVVYSDYITTVSDSYAEEIKTQELGEGIHGLFQKYDYKLSGIVNGIDKISYPLSKKPHKILKADLQKKLGLDVEEDTPLIVIITRLDRQKGLDYIVEKFDEMMSLGIQFILLGTGEKRYEHFFAYQEYLHKGQVCSYIGFNQELSTEIYAGADIFLMPSVFEPCGLSQMIAMRYGCIPVVRETGGLKDTVKPYNEYTGEGDGFGFKQANADDMIKTLKYAIKMYHRPNVWQEIIKNAKKRDNSWDKPAKRYKELYQRLIEG</sequence>
<feature type="chain" id="PRO_0000188616" description="Glycogen synthase">
    <location>
        <begin position="1"/>
        <end position="461"/>
    </location>
</feature>
<feature type="binding site" evidence="1">
    <location>
        <position position="15"/>
    </location>
    <ligand>
        <name>ADP-alpha-D-glucose</name>
        <dbReference type="ChEBI" id="CHEBI:57498"/>
    </ligand>
</feature>
<evidence type="ECO:0000255" key="1">
    <source>
        <dbReference type="HAMAP-Rule" id="MF_00484"/>
    </source>
</evidence>
<comment type="function">
    <text evidence="1">Synthesizes alpha-1,4-glucan chains using ADP-glucose.</text>
</comment>
<comment type="catalytic activity">
    <reaction evidence="1">
        <text>[(1-&gt;4)-alpha-D-glucosyl](n) + ADP-alpha-D-glucose = [(1-&gt;4)-alpha-D-glucosyl](n+1) + ADP + H(+)</text>
        <dbReference type="Rhea" id="RHEA:18189"/>
        <dbReference type="Rhea" id="RHEA-COMP:9584"/>
        <dbReference type="Rhea" id="RHEA-COMP:9587"/>
        <dbReference type="ChEBI" id="CHEBI:15378"/>
        <dbReference type="ChEBI" id="CHEBI:15444"/>
        <dbReference type="ChEBI" id="CHEBI:57498"/>
        <dbReference type="ChEBI" id="CHEBI:456216"/>
        <dbReference type="EC" id="2.4.1.21"/>
    </reaction>
</comment>
<comment type="pathway">
    <text evidence="1">Glycan biosynthesis; glycogen biosynthesis.</text>
</comment>
<comment type="similarity">
    <text evidence="1">Belongs to the glycosyltransferase 1 family. Bacterial/plant glycogen synthase subfamily.</text>
</comment>
<name>GLGA_FUSNN</name>
<organism>
    <name type="scientific">Fusobacterium nucleatum subsp. nucleatum (strain ATCC 25586 / DSM 15643 / BCRC 10681 / CIP 101130 / JCM 8532 / KCTC 2640 / LMG 13131 / VPI 4355)</name>
    <dbReference type="NCBI Taxonomy" id="190304"/>
    <lineage>
        <taxon>Bacteria</taxon>
        <taxon>Fusobacteriati</taxon>
        <taxon>Fusobacteriota</taxon>
        <taxon>Fusobacteriia</taxon>
        <taxon>Fusobacteriales</taxon>
        <taxon>Fusobacteriaceae</taxon>
        <taxon>Fusobacterium</taxon>
    </lineage>
</organism>
<keyword id="KW-0320">Glycogen biosynthesis</keyword>
<keyword id="KW-0328">Glycosyltransferase</keyword>
<keyword id="KW-1185">Reference proteome</keyword>
<keyword id="KW-0808">Transferase</keyword>
<reference key="1">
    <citation type="journal article" date="2002" name="J. Bacteriol.">
        <title>Genome sequence and analysis of the oral bacterium Fusobacterium nucleatum strain ATCC 25586.</title>
        <authorList>
            <person name="Kapatral V."/>
            <person name="Anderson I."/>
            <person name="Ivanova N."/>
            <person name="Reznik G."/>
            <person name="Los T."/>
            <person name="Lykidis A."/>
            <person name="Bhattacharyya A."/>
            <person name="Bartman A."/>
            <person name="Gardner W."/>
            <person name="Grechkin G."/>
            <person name="Zhu L."/>
            <person name="Vasieva O."/>
            <person name="Chu L."/>
            <person name="Kogan Y."/>
            <person name="Chaga O."/>
            <person name="Goltsman E."/>
            <person name="Bernal A."/>
            <person name="Larsen N."/>
            <person name="D'Souza M."/>
            <person name="Walunas T."/>
            <person name="Pusch G."/>
            <person name="Haselkorn R."/>
            <person name="Fonstein M."/>
            <person name="Kyrpides N.C."/>
            <person name="Overbeek R."/>
        </authorList>
    </citation>
    <scope>NUCLEOTIDE SEQUENCE [LARGE SCALE GENOMIC DNA]</scope>
    <source>
        <strain>ATCC 25586 / DSM 15643 / BCRC 10681 / CIP 101130 / JCM 8532 / KCTC 2640 / LMG 13131 / VPI 4355</strain>
    </source>
</reference>
<accession>Q8RF65</accession>
<protein>
    <recommendedName>
        <fullName evidence="1">Glycogen synthase</fullName>
        <ecNumber evidence="1">2.4.1.21</ecNumber>
    </recommendedName>
    <alternativeName>
        <fullName evidence="1">Starch [bacterial glycogen] synthase</fullName>
    </alternativeName>
</protein>